<comment type="function">
    <text evidence="2 3 4 5">O-methyltransferase; part of the 2 gene clusters that mediate the biosynthesis of fusicoccins, diterpene glucosides that display phytohormone-like activity and function as potent activators of plasma membrane H(+)-ATPases in plants by modifying 14-3-3 proteins and cause the plant disease constriction canker (PubMed:22870285). The first step in the pathway is performed by the fusicoccadiene synthase PaFS that possesses both prenyl transferase and terpene cyclase activity, converting isopentenyl diphosphate and dimethylallyl diphosphate into geranylgeranyl diphosphate (GGDP) and successively converting GGDP into fusicocca-2,10(14)-diene, a precursor for fusicoccin H (PubMed:17360612). The second step is the oxidation at the C-8 position by the cytochrome P450 monooxygenase PaP450-2 to yield fusicocca-2,10(14)-diene-8-beta-ol (PubMed:22870285). The cytochrome P450 monooxygenase PaP450-1 then catalyzes the hydroxylation at the C-16 position to produce fusicocca-2,10(14)-diene-8-beta,16-diol (PubMed:22870285). The dioxygenase fc-dox then catalyzes the 16-oxydation of fusicocca-2,10(14)-diene-8-beta,16-diol to yield an aldehyde (8-beta-hydroxyfusicocca-1,10(14)-dien-16-al) (PubMed:21299202, PubMed:22870285). The short-chain dehydrogenase/reductase fc-sdr catalyzes the reduction of the aldehyde to yield fusicocca-1,10(14)-diene-8-beta,16-diol (PubMed:21299202, PubMed:22870285). The next step is the hydroxylation at C-9 performed by the cytochrome P450 monooxygenase PaP450-3 that leads to fusicoccin H aglycon which is glycosylated to fusicoccin H by the O-glycosyltransferase PaGT (PubMed:22870285). Hydroxylation at C-12 by the cytochrome P450 monooxygenase PaP450-4 leads then to the production of fusicoccin Q and is followed by methylation by the O-methyltransferase PaMT to yield fusicoccin P (PubMed:22870285). Fusicoccin P is further converted to fusicoccin J via prenylation by the O-glucose prenyltransferase PaPT (PubMed:22287087). Cytochrome P450 monooxygenase PaP450-5 then performs hydroxylation at C-19 to yield dideacetyl-fusicoccin A which is acetylated to 3'-O-deacetyl-fusicoccin A by the O-acetyltransferase PaAT-2 (PubMed:22870285). Finally, a another acetylation by the O-acetyltransferase PaAT-1 yields fusicoccin A (PubMed:22870285).</text>
</comment>
<comment type="cofactor">
    <cofactor evidence="5">
        <name>S-adenosyl-L-methionine</name>
        <dbReference type="ChEBI" id="CHEBI:59789"/>
    </cofactor>
</comment>
<comment type="biophysicochemical properties">
    <kinetics>
        <KM evidence="5">17 uM for fusicoccin H</KM>
        <KM evidence="5">563 uM for S-adenosyl-L-methionine</KM>
    </kinetics>
    <phDependence>
        <text evidence="5">Optimum pH is 9.0.</text>
    </phDependence>
    <temperatureDependence>
        <text evidence="5">Optimum temperature is 35 degrees Celsius.</text>
    </temperatureDependence>
</comment>
<comment type="pathway">
    <text evidence="5">Mycotoxin biosynthesis.</text>
</comment>
<comment type="similarity">
    <text evidence="7">Belongs to the class I-like SAM-binding methyltransferase superfamily. Cation-independent O-methyltransferase family. COMT subfamily.</text>
</comment>
<evidence type="ECO:0000255" key="1">
    <source>
        <dbReference type="PROSITE-ProRule" id="PRU01020"/>
    </source>
</evidence>
<evidence type="ECO:0000269" key="2">
    <source>
    </source>
</evidence>
<evidence type="ECO:0000269" key="3">
    <source>
    </source>
</evidence>
<evidence type="ECO:0000269" key="4">
    <source>
    </source>
</evidence>
<evidence type="ECO:0000269" key="5">
    <source>
    </source>
</evidence>
<evidence type="ECO:0000303" key="6">
    <source>
    </source>
</evidence>
<evidence type="ECO:0000305" key="7"/>
<name>FC8_PHOAM</name>
<reference key="1">
    <citation type="journal article" date="2012" name="PLoS ONE">
        <title>Molecular breeding of a fungus producing a precursor diterpene suitable for semi-synthesis by dissection of the biosynthetic machinery.</title>
        <authorList>
            <person name="Noike M."/>
            <person name="Ono Y."/>
            <person name="Araki Y."/>
            <person name="Tanio R."/>
            <person name="Higuchi Y."/>
            <person name="Nitta H."/>
            <person name="Hamano Y."/>
            <person name="Toyomasu T."/>
            <person name="Sassa T."/>
            <person name="Kato N."/>
            <person name="Dairi T."/>
        </authorList>
    </citation>
    <scope>NUCLEOTIDE SEQUENCE [MRNA]</scope>
    <scope>FUNCTION</scope>
    <scope>CATALYTIC ACTIVITY</scope>
    <scope>BIOPHYSICOCHEMICAL PROPERTIES</scope>
    <scope>COFACTOR</scope>
    <scope>PATHWAY</scope>
</reference>
<reference key="2">
    <citation type="journal article" date="2007" name="Proc. Natl. Acad. Sci. U.S.A.">
        <title>Fusicoccins are biosynthesized by an unusual chimera diterpene synthase in fungi.</title>
        <authorList>
            <person name="Toyomasu T."/>
            <person name="Tsukahara M."/>
            <person name="Kaneko A."/>
            <person name="Niida R."/>
            <person name="Mitsuhashi W."/>
            <person name="Dairi T."/>
            <person name="Kato N."/>
            <person name="Sassa T."/>
        </authorList>
    </citation>
    <scope>FUNCTION</scope>
</reference>
<reference key="3">
    <citation type="journal article" date="2011" name="J. Am. Chem. Soc.">
        <title>Dioxygenases, key enzymes to determine the aglycon structures of fusicoccin and brassicicene, diterpene compounds produced by fungi.</title>
        <authorList>
            <person name="Ono Y."/>
            <person name="Minami A."/>
            <person name="Noike M."/>
            <person name="Higuchi Y."/>
            <person name="Toyomasu T."/>
            <person name="Sassa T."/>
            <person name="Kato N."/>
            <person name="Dairi T."/>
        </authorList>
    </citation>
    <scope>FUNCTION</scope>
</reference>
<reference key="4">
    <citation type="journal article" date="2012" name="ChemBioChem">
        <title>An enzyme catalyzing O-prenylation of the glucose moiety of fusicoccin A, a diterpene glucoside produced by the fungus Phomopsis amygdali.</title>
        <authorList>
            <person name="Noike M."/>
            <person name="Liu C."/>
            <person name="Ono Y."/>
            <person name="Hamano Y."/>
            <person name="Toyomasu T."/>
            <person name="Sassa T."/>
            <person name="Kato N."/>
            <person name="Dairi T."/>
        </authorList>
    </citation>
    <scope>FUNCTION</scope>
</reference>
<gene>
    <name evidence="6" type="primary">PaMT</name>
    <name evidence="6" type="synonym">orf8</name>
</gene>
<sequence>MDDSKTNGRQNASRIVALANTIQKSVAELQAVLDSKGLPAPSFAEDASPDPLPFEAQKAQDAVLDATAELHDILLEPTALVLKTISNEYVAFLGFISRYDIPNFVPLGGRVSFTDIAKKTGFEEGIVKRLLRAAICRRIFQEPESGYVAHTKASKAMRSKILLTFLRTGADMGWYTIFKLVDAAEKWPDVQEQDQTAFNLAHDVQGTYFENVAKSAKNAELFASGMATQWELPGYELHHLLDGYDWTGLGKAKVIDVGGFRGRISIALAERFPDLDLLVQDMEMNEADAHAAVPSALKDRVHFMSRDIFTTQPVRADVYYIRQIFHDWSDKYCTKLLRAHTSQLEAGSSVLIHDCILPEVPGSSLPLWKERDMRAMDLGLVAHMNGRERSVDEWHKLVTEADPRFKIRQISQPEGSMLALIEVVFNA</sequence>
<keyword id="KW-0489">Methyltransferase</keyword>
<keyword id="KW-0949">S-adenosyl-L-methionine</keyword>
<keyword id="KW-0808">Transferase</keyword>
<proteinExistence type="evidence at protein level"/>
<protein>
    <recommendedName>
        <fullName evidence="6">O-methyltransferase PaMT</fullName>
        <ecNumber evidence="5">2.1.1.-</ecNumber>
    </recommendedName>
    <alternativeName>
        <fullName evidence="6">Fusicoccin A biosynthetic gene clusters protein 8</fullName>
    </alternativeName>
</protein>
<accession>L0MXX3</accession>
<organism>
    <name type="scientific">Phomopsis amygdali</name>
    <name type="common">Fusicoccum amygdali</name>
    <dbReference type="NCBI Taxonomy" id="1214568"/>
    <lineage>
        <taxon>Eukaryota</taxon>
        <taxon>Fungi</taxon>
        <taxon>Dikarya</taxon>
        <taxon>Ascomycota</taxon>
        <taxon>Pezizomycotina</taxon>
        <taxon>Sordariomycetes</taxon>
        <taxon>Sordariomycetidae</taxon>
        <taxon>Diaporthales</taxon>
        <taxon>Diaporthaceae</taxon>
        <taxon>Diaporthe</taxon>
    </lineage>
</organism>
<feature type="chain" id="PRO_0000445458" description="O-methyltransferase PaMT">
    <location>
        <begin position="1"/>
        <end position="427"/>
    </location>
</feature>
<feature type="active site" description="Proton acceptor" evidence="1">
    <location>
        <position position="326"/>
    </location>
</feature>
<feature type="binding site" evidence="1">
    <location>
        <position position="230"/>
    </location>
    <ligand>
        <name>S-adenosyl-L-methionine</name>
        <dbReference type="ChEBI" id="CHEBI:59789"/>
    </ligand>
</feature>
<feature type="binding site" evidence="1">
    <location>
        <position position="281"/>
    </location>
    <ligand>
        <name>S-adenosyl-L-methionine</name>
        <dbReference type="ChEBI" id="CHEBI:59789"/>
    </ligand>
</feature>
<dbReference type="EC" id="2.1.1.-" evidence="5"/>
<dbReference type="EMBL" id="AB686274">
    <property type="protein sequence ID" value="BAM71033.1"/>
    <property type="molecule type" value="mRNA"/>
</dbReference>
<dbReference type="SMR" id="L0MXX3"/>
<dbReference type="GO" id="GO:0008171">
    <property type="term" value="F:O-methyltransferase activity"/>
    <property type="evidence" value="ECO:0007669"/>
    <property type="project" value="InterPro"/>
</dbReference>
<dbReference type="GO" id="GO:0032259">
    <property type="term" value="P:methylation"/>
    <property type="evidence" value="ECO:0007669"/>
    <property type="project" value="UniProtKB-KW"/>
</dbReference>
<dbReference type="GO" id="GO:0044550">
    <property type="term" value="P:secondary metabolite biosynthetic process"/>
    <property type="evidence" value="ECO:0007669"/>
    <property type="project" value="UniProtKB-ARBA"/>
</dbReference>
<dbReference type="Gene3D" id="3.40.50.150">
    <property type="entry name" value="Vaccinia Virus protein VP39"/>
    <property type="match status" value="1"/>
</dbReference>
<dbReference type="Gene3D" id="1.10.10.10">
    <property type="entry name" value="Winged helix-like DNA-binding domain superfamily/Winged helix DNA-binding domain"/>
    <property type="match status" value="1"/>
</dbReference>
<dbReference type="InterPro" id="IPR016461">
    <property type="entry name" value="COMT-like"/>
</dbReference>
<dbReference type="InterPro" id="IPR001077">
    <property type="entry name" value="O_MeTrfase_dom"/>
</dbReference>
<dbReference type="InterPro" id="IPR029063">
    <property type="entry name" value="SAM-dependent_MTases_sf"/>
</dbReference>
<dbReference type="InterPro" id="IPR036388">
    <property type="entry name" value="WH-like_DNA-bd_sf"/>
</dbReference>
<dbReference type="InterPro" id="IPR036390">
    <property type="entry name" value="WH_DNA-bd_sf"/>
</dbReference>
<dbReference type="PANTHER" id="PTHR43712">
    <property type="entry name" value="PUTATIVE (AFU_ORTHOLOGUE AFUA_4G14580)-RELATED"/>
    <property type="match status" value="1"/>
</dbReference>
<dbReference type="PANTHER" id="PTHR43712:SF12">
    <property type="entry name" value="STERIGMATOCYSTIN 8-O-METHYLTRANSFERASE"/>
    <property type="match status" value="1"/>
</dbReference>
<dbReference type="Pfam" id="PF00891">
    <property type="entry name" value="Methyltransf_2"/>
    <property type="match status" value="1"/>
</dbReference>
<dbReference type="SUPFAM" id="SSF53335">
    <property type="entry name" value="S-adenosyl-L-methionine-dependent methyltransferases"/>
    <property type="match status" value="1"/>
</dbReference>
<dbReference type="SUPFAM" id="SSF46785">
    <property type="entry name" value="Winged helix' DNA-binding domain"/>
    <property type="match status" value="1"/>
</dbReference>
<dbReference type="PROSITE" id="PS51683">
    <property type="entry name" value="SAM_OMT_II"/>
    <property type="match status" value="1"/>
</dbReference>